<keyword id="KW-0244">Early protein</keyword>
<keyword id="KW-0945">Host-virus interaction</keyword>
<keyword id="KW-1085">Inhibition of host caspases by virus</keyword>
<keyword id="KW-1119">Modulation of host cell apoptosis by virus</keyword>
<keyword id="KW-1185">Reference proteome</keyword>
<protein>
    <recommendedName>
        <fullName>Early E3 14.5 kDa protein</fullName>
    </recommendedName>
</protein>
<name>E3145_ADEB3</name>
<organism>
    <name type="scientific">Bovine adenovirus B serotype 3</name>
    <name type="common">BAdV-3</name>
    <name type="synonym">Mastadenovirus bos3</name>
    <dbReference type="NCBI Taxonomy" id="10510"/>
    <lineage>
        <taxon>Viruses</taxon>
        <taxon>Varidnaviria</taxon>
        <taxon>Bamfordvirae</taxon>
        <taxon>Preplasmiviricota</taxon>
        <taxon>Tectiliviricetes</taxon>
        <taxon>Rowavirales</taxon>
        <taxon>Adenoviridae</taxon>
        <taxon>Mastadenovirus</taxon>
        <taxon>Bovine mastadenovirus B</taxon>
    </lineage>
</organism>
<reference key="1">
    <citation type="journal article" date="1992" name="J. Gen. Virol.">
        <title>Sequence analysis of bovine adenovirus type 3 early region 3 and fibre protein genes.</title>
        <authorList>
            <person name="Mittal S.K."/>
            <person name="Prevec L."/>
            <person name="Babiuk L.A."/>
            <person name="Graham F.L."/>
        </authorList>
    </citation>
    <scope>NUCLEOTIDE SEQUENCE [GENOMIC DNA]</scope>
</reference>
<reference key="2">
    <citation type="journal article" date="1993" name="J. Gen. Virol.">
        <title>Sequence analysis of bovine adenovirus type 3 early region 3 and fibre protein genes.</title>
        <authorList>
            <person name="Mittal S.K."/>
            <person name="Prevec L."/>
            <person name="Babiuk L.A."/>
            <person name="Graham F.L."/>
        </authorList>
    </citation>
    <scope>NUCLEOTIDE SEQUENCE [GENOMIC DNA]</scope>
</reference>
<reference key="3">
    <citation type="journal article" date="1998" name="J. Virol.">
        <title>Nucleotide sequence, genome organization, and transcription map of bovine adenovirus type 3.</title>
        <authorList>
            <person name="Reddy P.S."/>
            <person name="Idamakanti N."/>
            <person name="Zakhartchouk A.N."/>
            <person name="Baxi M.K."/>
            <person name="Lee J.B."/>
            <person name="Pyne C."/>
            <person name="Babiuk L.A."/>
            <person name="Tikoo S.K."/>
        </authorList>
    </citation>
    <scope>NUCLEOTIDE SEQUENCE [LARGE SCALE GENOMIC DNA]</scope>
    <source>
        <strain>WBR-1</strain>
    </source>
</reference>
<dbReference type="EMBL" id="D16839">
    <property type="protein sequence ID" value="BAA04114.1"/>
    <property type="molecule type" value="Genomic_DNA"/>
</dbReference>
<dbReference type="EMBL" id="AF030154">
    <property type="protein sequence ID" value="AAD09735.1"/>
    <property type="molecule type" value="Genomic_DNA"/>
</dbReference>
<dbReference type="RefSeq" id="NP_046330.1">
    <property type="nucleotide sequence ID" value="NC_001876.1"/>
</dbReference>
<dbReference type="KEGG" id="vg:2652955"/>
<dbReference type="OrthoDB" id="26753at10239"/>
<dbReference type="Proteomes" id="UP000140422">
    <property type="component" value="Genome"/>
</dbReference>
<dbReference type="GO" id="GO:0052031">
    <property type="term" value="P:symbiont-mediated perturbation of host defense response"/>
    <property type="evidence" value="ECO:0007669"/>
    <property type="project" value="InterPro"/>
</dbReference>
<dbReference type="GO" id="GO:0033668">
    <property type="term" value="P:symbiont-mediated suppression of host apoptosis"/>
    <property type="evidence" value="ECO:0007669"/>
    <property type="project" value="UniProtKB-KW"/>
</dbReference>
<dbReference type="InterPro" id="IPR004985">
    <property type="entry name" value="Adeno_E3-15"/>
</dbReference>
<dbReference type="Pfam" id="PF03307">
    <property type="entry name" value="Adeno_E3_15_3"/>
    <property type="match status" value="1"/>
</dbReference>
<proteinExistence type="inferred from homology"/>
<evidence type="ECO:0000250" key="1"/>
<evidence type="ECO:0000305" key="2"/>
<gene>
    <name type="primary">E3</name>
</gene>
<organismHost>
    <name type="scientific">Bos taurus</name>
    <name type="common">Bovine</name>
    <dbReference type="NCBI Taxonomy" id="9913"/>
</organismHost>
<feature type="chain" id="PRO_0000221750" description="Early E3 14.5 kDa protein">
    <location>
        <begin position="1"/>
        <end position="121"/>
    </location>
</feature>
<comment type="function">
    <text evidence="1">Protects virus-infected cells from TNF-induced cytolysis.</text>
</comment>
<comment type="similarity">
    <text evidence="2">Belongs to the adenoviridae E3_15 family.</text>
</comment>
<accession>Q03552</accession>
<sequence length="121" mass="13276">MEPDGVHAEQQFILNQISCANTALQRQREELASLVMLHACKRGLFCPVKTYKLSLNASASEHSLHFEKSPSRFTLVNTHAGASVRVALHHQGASGSIRCSCSHAECLPVLLKTLCAFNFLD</sequence>